<reference key="1">
    <citation type="journal article" date="2001" name="Nature">
        <title>Genome sequence of enterohaemorrhagic Escherichia coli O157:H7.</title>
        <authorList>
            <person name="Perna N.T."/>
            <person name="Plunkett G. III"/>
            <person name="Burland V."/>
            <person name="Mau B."/>
            <person name="Glasner J.D."/>
            <person name="Rose D.J."/>
            <person name="Mayhew G.F."/>
            <person name="Evans P.S."/>
            <person name="Gregor J."/>
            <person name="Kirkpatrick H.A."/>
            <person name="Posfai G."/>
            <person name="Hackett J."/>
            <person name="Klink S."/>
            <person name="Boutin A."/>
            <person name="Shao Y."/>
            <person name="Miller L."/>
            <person name="Grotbeck E.J."/>
            <person name="Davis N.W."/>
            <person name="Lim A."/>
            <person name="Dimalanta E.T."/>
            <person name="Potamousis K."/>
            <person name="Apodaca J."/>
            <person name="Anantharaman T.S."/>
            <person name="Lin J."/>
            <person name="Yen G."/>
            <person name="Schwartz D.C."/>
            <person name="Welch R.A."/>
            <person name="Blattner F.R."/>
        </authorList>
    </citation>
    <scope>NUCLEOTIDE SEQUENCE [LARGE SCALE GENOMIC DNA]</scope>
    <source>
        <strain>O157:H7 / EDL933 / ATCC 700927 / EHEC</strain>
    </source>
</reference>
<reference key="2">
    <citation type="journal article" date="2001" name="DNA Res.">
        <title>Complete genome sequence of enterohemorrhagic Escherichia coli O157:H7 and genomic comparison with a laboratory strain K-12.</title>
        <authorList>
            <person name="Hayashi T."/>
            <person name="Makino K."/>
            <person name="Ohnishi M."/>
            <person name="Kurokawa K."/>
            <person name="Ishii K."/>
            <person name="Yokoyama K."/>
            <person name="Han C.-G."/>
            <person name="Ohtsubo E."/>
            <person name="Nakayama K."/>
            <person name="Murata T."/>
            <person name="Tanaka M."/>
            <person name="Tobe T."/>
            <person name="Iida T."/>
            <person name="Takami H."/>
            <person name="Honda T."/>
            <person name="Sasakawa C."/>
            <person name="Ogasawara N."/>
            <person name="Yasunaga T."/>
            <person name="Kuhara S."/>
            <person name="Shiba T."/>
            <person name="Hattori M."/>
            <person name="Shinagawa H."/>
        </authorList>
    </citation>
    <scope>NUCLEOTIDE SEQUENCE [LARGE SCALE GENOMIC DNA]</scope>
    <source>
        <strain>O157:H7 / Sakai / RIMD 0509952 / EHEC</strain>
    </source>
</reference>
<proteinExistence type="inferred from homology"/>
<accession>P0AGH4</accession>
<accession>P76838</accession>
<accession>Q47623</accession>
<keyword id="KW-0997">Cell inner membrane</keyword>
<keyword id="KW-1003">Cell membrane</keyword>
<keyword id="KW-0472">Membrane</keyword>
<keyword id="KW-0571">Peptide transport</keyword>
<keyword id="KW-0653">Protein transport</keyword>
<keyword id="KW-1185">Reference proteome</keyword>
<keyword id="KW-0812">Transmembrane</keyword>
<keyword id="KW-1133">Transmembrane helix</keyword>
<keyword id="KW-0813">Transport</keyword>
<gene>
    <name type="primary">sapB</name>
    <name type="ordered locus">Z2496</name>
    <name type="ordered locus">ECs1870</name>
</gene>
<name>SAPB_ECO57</name>
<comment type="function">
    <text evidence="1">Involved in a peptide intake transport system that plays a role in the resistance to antimicrobial peptides.</text>
</comment>
<comment type="subcellular location">
    <subcellularLocation>
        <location evidence="1">Cell inner membrane</location>
        <topology evidence="3">Multi-pass membrane protein</topology>
    </subcellularLocation>
</comment>
<comment type="similarity">
    <text evidence="4">Belongs to the binding-protein-dependent transport system permease family. OppBC subfamily.</text>
</comment>
<protein>
    <recommendedName>
        <fullName>Peptide transport system permease protein SapB</fullName>
    </recommendedName>
</protein>
<feature type="chain" id="PRO_0000060159" description="Peptide transport system permease protein SapB">
    <location>
        <begin position="1"/>
        <end position="321"/>
    </location>
</feature>
<feature type="topological domain" description="Cytoplasmic" evidence="2">
    <location>
        <begin position="1"/>
        <end position="8"/>
    </location>
</feature>
<feature type="transmembrane region" description="Helical" evidence="3">
    <location>
        <begin position="9"/>
        <end position="29"/>
    </location>
</feature>
<feature type="topological domain" description="Periplasmic" evidence="2">
    <location>
        <begin position="30"/>
        <end position="80"/>
    </location>
</feature>
<feature type="transmembrane region" description="Helical" evidence="3">
    <location>
        <begin position="81"/>
        <end position="101"/>
    </location>
</feature>
<feature type="topological domain" description="Cytoplasmic" evidence="2">
    <location>
        <begin position="102"/>
        <end position="112"/>
    </location>
</feature>
<feature type="transmembrane region" description="Helical" evidence="3">
    <location>
        <begin position="113"/>
        <end position="133"/>
    </location>
</feature>
<feature type="topological domain" description="Periplasmic" evidence="2">
    <location>
        <begin position="134"/>
        <end position="174"/>
    </location>
</feature>
<feature type="transmembrane region" description="Helical" evidence="3">
    <location>
        <begin position="175"/>
        <end position="195"/>
    </location>
</feature>
<feature type="topological domain" description="Cytoplasmic" evidence="2">
    <location>
        <begin position="196"/>
        <end position="248"/>
    </location>
</feature>
<feature type="transmembrane region" description="Helical" evidence="3">
    <location>
        <begin position="249"/>
        <end position="269"/>
    </location>
</feature>
<feature type="topological domain" description="Periplasmic" evidence="2">
    <location>
        <begin position="270"/>
        <end position="280"/>
    </location>
</feature>
<feature type="transmembrane region" description="Helical" evidence="3">
    <location>
        <begin position="281"/>
        <end position="301"/>
    </location>
</feature>
<feature type="topological domain" description="Cytoplasmic" evidence="2">
    <location>
        <begin position="302"/>
        <end position="321"/>
    </location>
</feature>
<feature type="domain" description="ABC transmembrane type-1" evidence="3">
    <location>
        <begin position="74"/>
        <end position="302"/>
    </location>
</feature>
<evidence type="ECO:0000250" key="1"/>
<evidence type="ECO:0000255" key="2"/>
<evidence type="ECO:0000255" key="3">
    <source>
        <dbReference type="PROSITE-ProRule" id="PRU00441"/>
    </source>
</evidence>
<evidence type="ECO:0000305" key="4"/>
<sequence length="321" mass="36038">MIIFTLRRILLLIVTLFLLTFVGFSLSYFTPHAPLQGASLWNAWVFWFNGLIHWDFGVSSINGQPIAEQLKEVFPATMELCILAFGFALIVGIPVGMIAGITRHKWQDNLINAIALLGFSIPVFWLALLLTLFCSLTLGWLPVSGRFDLLYEVKPITGFALIDAWLSDSPWRDEMIMSAIRHMILPVITLSVAPTTEVIRLMRISTIEVYDQNYVKAAATRGLSRFTILRRHVLHNALPPVIPRLGLQFSTMLTLAMITEMVFSWPGLGRWLINAIRQQDYAAISAGVMVCGSLVIIVNVISDILGAMANPLKHKEWYALR</sequence>
<organism>
    <name type="scientific">Escherichia coli O157:H7</name>
    <dbReference type="NCBI Taxonomy" id="83334"/>
    <lineage>
        <taxon>Bacteria</taxon>
        <taxon>Pseudomonadati</taxon>
        <taxon>Pseudomonadota</taxon>
        <taxon>Gammaproteobacteria</taxon>
        <taxon>Enterobacterales</taxon>
        <taxon>Enterobacteriaceae</taxon>
        <taxon>Escherichia</taxon>
    </lineage>
</organism>
<dbReference type="EMBL" id="AE005174">
    <property type="protein sequence ID" value="AAG56511.1"/>
    <property type="molecule type" value="Genomic_DNA"/>
</dbReference>
<dbReference type="EMBL" id="BA000007">
    <property type="protein sequence ID" value="BAB35293.1"/>
    <property type="molecule type" value="Genomic_DNA"/>
</dbReference>
<dbReference type="PIR" id="C85756">
    <property type="entry name" value="C85756"/>
</dbReference>
<dbReference type="PIR" id="F90862">
    <property type="entry name" value="F90862"/>
</dbReference>
<dbReference type="RefSeq" id="NP_309897.1">
    <property type="nucleotide sequence ID" value="NC_002695.1"/>
</dbReference>
<dbReference type="RefSeq" id="WP_000583277.1">
    <property type="nucleotide sequence ID" value="NZ_VOAI01000015.1"/>
</dbReference>
<dbReference type="SMR" id="P0AGH4"/>
<dbReference type="STRING" id="155864.Z2496"/>
<dbReference type="GeneID" id="912731"/>
<dbReference type="GeneID" id="93775418"/>
<dbReference type="KEGG" id="ece:Z2496"/>
<dbReference type="KEGG" id="ecs:ECs_1870"/>
<dbReference type="PATRIC" id="fig|386585.9.peg.1972"/>
<dbReference type="eggNOG" id="COG4168">
    <property type="taxonomic scope" value="Bacteria"/>
</dbReference>
<dbReference type="HOGENOM" id="CLU_036879_0_3_6"/>
<dbReference type="OMA" id="WRHEMIV"/>
<dbReference type="Proteomes" id="UP000000558">
    <property type="component" value="Chromosome"/>
</dbReference>
<dbReference type="Proteomes" id="UP000002519">
    <property type="component" value="Chromosome"/>
</dbReference>
<dbReference type="GO" id="GO:0005886">
    <property type="term" value="C:plasma membrane"/>
    <property type="evidence" value="ECO:0007669"/>
    <property type="project" value="UniProtKB-SubCell"/>
</dbReference>
<dbReference type="GO" id="GO:0071916">
    <property type="term" value="F:dipeptide transmembrane transporter activity"/>
    <property type="evidence" value="ECO:0007669"/>
    <property type="project" value="TreeGrafter"/>
</dbReference>
<dbReference type="GO" id="GO:0015031">
    <property type="term" value="P:protein transport"/>
    <property type="evidence" value="ECO:0007669"/>
    <property type="project" value="UniProtKB-KW"/>
</dbReference>
<dbReference type="CDD" id="cd06261">
    <property type="entry name" value="TM_PBP2"/>
    <property type="match status" value="1"/>
</dbReference>
<dbReference type="Gene3D" id="1.10.3720.10">
    <property type="entry name" value="MetI-like"/>
    <property type="match status" value="1"/>
</dbReference>
<dbReference type="InterPro" id="IPR000515">
    <property type="entry name" value="MetI-like"/>
</dbReference>
<dbReference type="InterPro" id="IPR035906">
    <property type="entry name" value="MetI-like_sf"/>
</dbReference>
<dbReference type="NCBIfam" id="NF011690">
    <property type="entry name" value="PRK15110.1"/>
    <property type="match status" value="1"/>
</dbReference>
<dbReference type="PANTHER" id="PTHR43163">
    <property type="entry name" value="DIPEPTIDE TRANSPORT SYSTEM PERMEASE PROTEIN DPPB-RELATED"/>
    <property type="match status" value="1"/>
</dbReference>
<dbReference type="PANTHER" id="PTHR43163:SF4">
    <property type="entry name" value="PUTRESCINE EXPORT SYSTEM PERMEASE PROTEIN SAPB"/>
    <property type="match status" value="1"/>
</dbReference>
<dbReference type="Pfam" id="PF00528">
    <property type="entry name" value="BPD_transp_1"/>
    <property type="match status" value="1"/>
</dbReference>
<dbReference type="SUPFAM" id="SSF161098">
    <property type="entry name" value="MetI-like"/>
    <property type="match status" value="1"/>
</dbReference>
<dbReference type="PROSITE" id="PS50928">
    <property type="entry name" value="ABC_TM1"/>
    <property type="match status" value="1"/>
</dbReference>